<feature type="chain" id="PRO_1000142463" description="Large ribosomal subunit protein uL5">
    <location>
        <begin position="1"/>
        <end position="181"/>
    </location>
</feature>
<comment type="function">
    <text evidence="1">This is one of the proteins that bind and probably mediate the attachment of the 5S RNA into the large ribosomal subunit, where it forms part of the central protuberance. In the 70S ribosome it contacts protein S13 of the 30S subunit (bridge B1b), connecting the 2 subunits; this bridge is implicated in subunit movement. Contacts the P site tRNA; the 5S rRNA and some of its associated proteins might help stabilize positioning of ribosome-bound tRNAs.</text>
</comment>
<comment type="subunit">
    <text evidence="1">Part of the 50S ribosomal subunit; part of the 5S rRNA/L5/L18/L25 subcomplex. Contacts the 5S rRNA and the P site tRNA. Forms a bridge to the 30S subunit in the 70S ribosome.</text>
</comment>
<comment type="similarity">
    <text evidence="1">Belongs to the universal ribosomal protein uL5 family.</text>
</comment>
<proteinExistence type="inferred from homology"/>
<evidence type="ECO:0000255" key="1">
    <source>
        <dbReference type="HAMAP-Rule" id="MF_01333"/>
    </source>
</evidence>
<evidence type="ECO:0000305" key="2"/>
<dbReference type="EMBL" id="CP000951">
    <property type="protein sequence ID" value="ACA99055.1"/>
    <property type="molecule type" value="Genomic_DNA"/>
</dbReference>
<dbReference type="RefSeq" id="WP_012306678.1">
    <property type="nucleotide sequence ID" value="NZ_JAHHPU010000001.1"/>
</dbReference>
<dbReference type="SMR" id="B1XJS7"/>
<dbReference type="STRING" id="32049.SYNPCC7002_A1053"/>
<dbReference type="KEGG" id="syp:SYNPCC7002_A1053"/>
<dbReference type="eggNOG" id="COG0094">
    <property type="taxonomic scope" value="Bacteria"/>
</dbReference>
<dbReference type="HOGENOM" id="CLU_061015_2_1_3"/>
<dbReference type="Proteomes" id="UP000001688">
    <property type="component" value="Chromosome"/>
</dbReference>
<dbReference type="GO" id="GO:1990904">
    <property type="term" value="C:ribonucleoprotein complex"/>
    <property type="evidence" value="ECO:0007669"/>
    <property type="project" value="UniProtKB-KW"/>
</dbReference>
<dbReference type="GO" id="GO:0005840">
    <property type="term" value="C:ribosome"/>
    <property type="evidence" value="ECO:0007669"/>
    <property type="project" value="UniProtKB-KW"/>
</dbReference>
<dbReference type="GO" id="GO:0019843">
    <property type="term" value="F:rRNA binding"/>
    <property type="evidence" value="ECO:0007669"/>
    <property type="project" value="UniProtKB-UniRule"/>
</dbReference>
<dbReference type="GO" id="GO:0003735">
    <property type="term" value="F:structural constituent of ribosome"/>
    <property type="evidence" value="ECO:0007669"/>
    <property type="project" value="InterPro"/>
</dbReference>
<dbReference type="GO" id="GO:0000049">
    <property type="term" value="F:tRNA binding"/>
    <property type="evidence" value="ECO:0007669"/>
    <property type="project" value="UniProtKB-UniRule"/>
</dbReference>
<dbReference type="GO" id="GO:0006412">
    <property type="term" value="P:translation"/>
    <property type="evidence" value="ECO:0007669"/>
    <property type="project" value="UniProtKB-UniRule"/>
</dbReference>
<dbReference type="FunFam" id="3.30.1440.10:FF:000001">
    <property type="entry name" value="50S ribosomal protein L5"/>
    <property type="match status" value="1"/>
</dbReference>
<dbReference type="Gene3D" id="3.30.1440.10">
    <property type="match status" value="1"/>
</dbReference>
<dbReference type="HAMAP" id="MF_01333_B">
    <property type="entry name" value="Ribosomal_uL5_B"/>
    <property type="match status" value="1"/>
</dbReference>
<dbReference type="InterPro" id="IPR002132">
    <property type="entry name" value="Ribosomal_uL5"/>
</dbReference>
<dbReference type="InterPro" id="IPR020930">
    <property type="entry name" value="Ribosomal_uL5_bac-type"/>
</dbReference>
<dbReference type="InterPro" id="IPR031309">
    <property type="entry name" value="Ribosomal_uL5_C"/>
</dbReference>
<dbReference type="InterPro" id="IPR020929">
    <property type="entry name" value="Ribosomal_uL5_CS"/>
</dbReference>
<dbReference type="InterPro" id="IPR022803">
    <property type="entry name" value="Ribosomal_uL5_dom_sf"/>
</dbReference>
<dbReference type="InterPro" id="IPR031310">
    <property type="entry name" value="Ribosomal_uL5_N"/>
</dbReference>
<dbReference type="NCBIfam" id="NF000585">
    <property type="entry name" value="PRK00010.1"/>
    <property type="match status" value="1"/>
</dbReference>
<dbReference type="PANTHER" id="PTHR11994">
    <property type="entry name" value="60S RIBOSOMAL PROTEIN L11-RELATED"/>
    <property type="match status" value="1"/>
</dbReference>
<dbReference type="Pfam" id="PF00281">
    <property type="entry name" value="Ribosomal_L5"/>
    <property type="match status" value="1"/>
</dbReference>
<dbReference type="Pfam" id="PF00673">
    <property type="entry name" value="Ribosomal_L5_C"/>
    <property type="match status" value="1"/>
</dbReference>
<dbReference type="PIRSF" id="PIRSF002161">
    <property type="entry name" value="Ribosomal_L5"/>
    <property type="match status" value="1"/>
</dbReference>
<dbReference type="SUPFAM" id="SSF55282">
    <property type="entry name" value="RL5-like"/>
    <property type="match status" value="1"/>
</dbReference>
<dbReference type="PROSITE" id="PS00358">
    <property type="entry name" value="RIBOSOMAL_L5"/>
    <property type="match status" value="1"/>
</dbReference>
<accession>B1XJS7</accession>
<keyword id="KW-1185">Reference proteome</keyword>
<keyword id="KW-0687">Ribonucleoprotein</keyword>
<keyword id="KW-0689">Ribosomal protein</keyword>
<keyword id="KW-0694">RNA-binding</keyword>
<keyword id="KW-0699">rRNA-binding</keyword>
<keyword id="KW-0820">tRNA-binding</keyword>
<reference key="1">
    <citation type="submission" date="2008-02" db="EMBL/GenBank/DDBJ databases">
        <title>Complete sequence of Synechococcus sp. PCC 7002.</title>
        <authorList>
            <person name="Li T."/>
            <person name="Zhao J."/>
            <person name="Zhao C."/>
            <person name="Liu Z."/>
            <person name="Zhao F."/>
            <person name="Marquardt J."/>
            <person name="Nomura C.T."/>
            <person name="Persson S."/>
            <person name="Detter J.C."/>
            <person name="Richardson P.M."/>
            <person name="Lanz C."/>
            <person name="Schuster S.C."/>
            <person name="Wang J."/>
            <person name="Li S."/>
            <person name="Huang X."/>
            <person name="Cai T."/>
            <person name="Yu Z."/>
            <person name="Luo J."/>
            <person name="Zhao J."/>
            <person name="Bryant D.A."/>
        </authorList>
    </citation>
    <scope>NUCLEOTIDE SEQUENCE [LARGE SCALE GENOMIC DNA]</scope>
    <source>
        <strain>ATCC 27264 / PCC 7002 / PR-6</strain>
    </source>
</reference>
<gene>
    <name evidence="1" type="primary">rplE</name>
    <name evidence="1" type="synonym">rpl5</name>
    <name type="ordered locus">SYNPCC7002_A1053</name>
</gene>
<protein>
    <recommendedName>
        <fullName evidence="1">Large ribosomal subunit protein uL5</fullName>
    </recommendedName>
    <alternativeName>
        <fullName evidence="2">50S ribosomal protein L5</fullName>
    </alternativeName>
</protein>
<sequence length="181" mass="20375">MSQRLKTLYQDSIVPKLTEQFGYSNVHEVPKLVKISVNRGLGEASSNAKAMESSIKELSTITGQRPVITRAKKAIAGFKIREGMPVGVMVTLRSEKMYSFLDRLISLALPRIRDFRGISPKSFDGRGNYSLGIREQLIFPEIDYDSIDQIRGMDISIITTARTDEEGRALLREMGMPFRES</sequence>
<name>RL5_PICP2</name>
<organism>
    <name type="scientific">Picosynechococcus sp. (strain ATCC 27264 / PCC 7002 / PR-6)</name>
    <name type="common">Agmenellum quadruplicatum</name>
    <dbReference type="NCBI Taxonomy" id="32049"/>
    <lineage>
        <taxon>Bacteria</taxon>
        <taxon>Bacillati</taxon>
        <taxon>Cyanobacteriota</taxon>
        <taxon>Cyanophyceae</taxon>
        <taxon>Oscillatoriophycideae</taxon>
        <taxon>Chroococcales</taxon>
        <taxon>Geminocystaceae</taxon>
        <taxon>Picosynechococcus</taxon>
    </lineage>
</organism>